<name>DAPA_METCA</name>
<keyword id="KW-0028">Amino-acid biosynthesis</keyword>
<keyword id="KW-0963">Cytoplasm</keyword>
<keyword id="KW-0220">Diaminopimelate biosynthesis</keyword>
<keyword id="KW-0456">Lyase</keyword>
<keyword id="KW-0457">Lysine biosynthesis</keyword>
<keyword id="KW-1185">Reference proteome</keyword>
<keyword id="KW-0704">Schiff base</keyword>
<evidence type="ECO:0000255" key="1">
    <source>
        <dbReference type="HAMAP-Rule" id="MF_00418"/>
    </source>
</evidence>
<evidence type="ECO:0000305" key="2"/>
<dbReference type="EC" id="4.3.3.7" evidence="1"/>
<dbReference type="EMBL" id="AE017282">
    <property type="protein sequence ID" value="AAU93204.1"/>
    <property type="molecule type" value="Genomic_DNA"/>
</dbReference>
<dbReference type="RefSeq" id="WP_010960012.1">
    <property type="nucleotide sequence ID" value="NC_002977.6"/>
</dbReference>
<dbReference type="SMR" id="Q60B13"/>
<dbReference type="STRING" id="243233.MCA0671"/>
<dbReference type="GeneID" id="88222994"/>
<dbReference type="KEGG" id="mca:MCA0671"/>
<dbReference type="eggNOG" id="COG0329">
    <property type="taxonomic scope" value="Bacteria"/>
</dbReference>
<dbReference type="HOGENOM" id="CLU_049343_7_1_6"/>
<dbReference type="UniPathway" id="UPA00034">
    <property type="reaction ID" value="UER00017"/>
</dbReference>
<dbReference type="Proteomes" id="UP000006821">
    <property type="component" value="Chromosome"/>
</dbReference>
<dbReference type="GO" id="GO:0005829">
    <property type="term" value="C:cytosol"/>
    <property type="evidence" value="ECO:0007669"/>
    <property type="project" value="TreeGrafter"/>
</dbReference>
<dbReference type="GO" id="GO:0008840">
    <property type="term" value="F:4-hydroxy-tetrahydrodipicolinate synthase activity"/>
    <property type="evidence" value="ECO:0007669"/>
    <property type="project" value="UniProtKB-UniRule"/>
</dbReference>
<dbReference type="GO" id="GO:0019877">
    <property type="term" value="P:diaminopimelate biosynthetic process"/>
    <property type="evidence" value="ECO:0007669"/>
    <property type="project" value="UniProtKB-UniRule"/>
</dbReference>
<dbReference type="GO" id="GO:0009089">
    <property type="term" value="P:lysine biosynthetic process via diaminopimelate"/>
    <property type="evidence" value="ECO:0007669"/>
    <property type="project" value="UniProtKB-UniRule"/>
</dbReference>
<dbReference type="CDD" id="cd00950">
    <property type="entry name" value="DHDPS"/>
    <property type="match status" value="1"/>
</dbReference>
<dbReference type="Gene3D" id="3.20.20.70">
    <property type="entry name" value="Aldolase class I"/>
    <property type="match status" value="1"/>
</dbReference>
<dbReference type="HAMAP" id="MF_00418">
    <property type="entry name" value="DapA"/>
    <property type="match status" value="1"/>
</dbReference>
<dbReference type="InterPro" id="IPR013785">
    <property type="entry name" value="Aldolase_TIM"/>
</dbReference>
<dbReference type="InterPro" id="IPR005263">
    <property type="entry name" value="DapA"/>
</dbReference>
<dbReference type="InterPro" id="IPR002220">
    <property type="entry name" value="DapA-like"/>
</dbReference>
<dbReference type="InterPro" id="IPR020625">
    <property type="entry name" value="Schiff_base-form_aldolases_AS"/>
</dbReference>
<dbReference type="InterPro" id="IPR020624">
    <property type="entry name" value="Schiff_base-form_aldolases_CS"/>
</dbReference>
<dbReference type="NCBIfam" id="TIGR00674">
    <property type="entry name" value="dapA"/>
    <property type="match status" value="1"/>
</dbReference>
<dbReference type="PANTHER" id="PTHR12128:SF66">
    <property type="entry name" value="4-HYDROXY-2-OXOGLUTARATE ALDOLASE, MITOCHONDRIAL"/>
    <property type="match status" value="1"/>
</dbReference>
<dbReference type="PANTHER" id="PTHR12128">
    <property type="entry name" value="DIHYDRODIPICOLINATE SYNTHASE"/>
    <property type="match status" value="1"/>
</dbReference>
<dbReference type="Pfam" id="PF00701">
    <property type="entry name" value="DHDPS"/>
    <property type="match status" value="1"/>
</dbReference>
<dbReference type="PIRSF" id="PIRSF001365">
    <property type="entry name" value="DHDPS"/>
    <property type="match status" value="1"/>
</dbReference>
<dbReference type="PRINTS" id="PR00146">
    <property type="entry name" value="DHPICSNTHASE"/>
</dbReference>
<dbReference type="SMART" id="SM01130">
    <property type="entry name" value="DHDPS"/>
    <property type="match status" value="1"/>
</dbReference>
<dbReference type="SUPFAM" id="SSF51569">
    <property type="entry name" value="Aldolase"/>
    <property type="match status" value="1"/>
</dbReference>
<dbReference type="PROSITE" id="PS00665">
    <property type="entry name" value="DHDPS_1"/>
    <property type="match status" value="1"/>
</dbReference>
<dbReference type="PROSITE" id="PS00666">
    <property type="entry name" value="DHDPS_2"/>
    <property type="match status" value="1"/>
</dbReference>
<proteinExistence type="inferred from homology"/>
<gene>
    <name evidence="1" type="primary">dapA</name>
    <name type="ordered locus">MCA0671</name>
</gene>
<accession>Q60B13</accession>
<reference key="1">
    <citation type="journal article" date="2004" name="PLoS Biol.">
        <title>Genomic insights into methanotrophy: the complete genome sequence of Methylococcus capsulatus (Bath).</title>
        <authorList>
            <person name="Ward N.L."/>
            <person name="Larsen O."/>
            <person name="Sakwa J."/>
            <person name="Bruseth L."/>
            <person name="Khouri H.M."/>
            <person name="Durkin A.S."/>
            <person name="Dimitrov G."/>
            <person name="Jiang L."/>
            <person name="Scanlan D."/>
            <person name="Kang K.H."/>
            <person name="Lewis M.R."/>
            <person name="Nelson K.E."/>
            <person name="Methe B.A."/>
            <person name="Wu M."/>
            <person name="Heidelberg J.F."/>
            <person name="Paulsen I.T."/>
            <person name="Fouts D.E."/>
            <person name="Ravel J."/>
            <person name="Tettelin H."/>
            <person name="Ren Q."/>
            <person name="Read T.D."/>
            <person name="DeBoy R.T."/>
            <person name="Seshadri R."/>
            <person name="Salzberg S.L."/>
            <person name="Jensen H.B."/>
            <person name="Birkeland N.K."/>
            <person name="Nelson W.C."/>
            <person name="Dodson R.J."/>
            <person name="Grindhaug S.H."/>
            <person name="Holt I.E."/>
            <person name="Eidhammer I."/>
            <person name="Jonasen I."/>
            <person name="Vanaken S."/>
            <person name="Utterback T.R."/>
            <person name="Feldblyum T.V."/>
            <person name="Fraser C.M."/>
            <person name="Lillehaug J.R."/>
            <person name="Eisen J.A."/>
        </authorList>
    </citation>
    <scope>NUCLEOTIDE SEQUENCE [LARGE SCALE GENOMIC DNA]</scope>
    <source>
        <strain>ATCC 33009 / NCIMB 11132 / Bath</strain>
    </source>
</reference>
<sequence length="291" mass="31068">MIQGSIVALATPMEPDGRLDVPGLRRLVEFHIEQGTDAIVAVGTTGESATLDEEEHTEVIRLVVEQAAGRIPVIAGTGANATTEAIRLTARAKAVGADACLLVTPYYNKPTQEGLYRHYLAVAEAVDIPQILYNVPGRTGCDMLPATVGRLAQVPGIVGIKEATGKLERLAEIRALCPEGFALYSGDDATACEFCLSGGNGVISVTANVAPRLMQEMCRAAIAGDRATAEAINRRLEALHHDLFIESNPIPVKWALHEMGLIQEGIRLPLTWLAASCREAVRQAMRQAGVL</sequence>
<protein>
    <recommendedName>
        <fullName evidence="1">4-hydroxy-tetrahydrodipicolinate synthase</fullName>
        <shortName evidence="1">HTPA synthase</shortName>
        <ecNumber evidence="1">4.3.3.7</ecNumber>
    </recommendedName>
</protein>
<feature type="chain" id="PRO_1000050215" description="4-hydroxy-tetrahydrodipicolinate synthase">
    <location>
        <begin position="1"/>
        <end position="291"/>
    </location>
</feature>
<feature type="active site" description="Proton donor/acceptor" evidence="1">
    <location>
        <position position="133"/>
    </location>
</feature>
<feature type="active site" description="Schiff-base intermediate with substrate" evidence="1">
    <location>
        <position position="161"/>
    </location>
</feature>
<feature type="binding site" evidence="1">
    <location>
        <position position="45"/>
    </location>
    <ligand>
        <name>pyruvate</name>
        <dbReference type="ChEBI" id="CHEBI:15361"/>
    </ligand>
</feature>
<feature type="binding site" evidence="1">
    <location>
        <position position="203"/>
    </location>
    <ligand>
        <name>pyruvate</name>
        <dbReference type="ChEBI" id="CHEBI:15361"/>
    </ligand>
</feature>
<feature type="site" description="Part of a proton relay during catalysis" evidence="1">
    <location>
        <position position="44"/>
    </location>
</feature>
<feature type="site" description="Part of a proton relay during catalysis" evidence="1">
    <location>
        <position position="107"/>
    </location>
</feature>
<organism>
    <name type="scientific">Methylococcus capsulatus (strain ATCC 33009 / NCIMB 11132 / Bath)</name>
    <dbReference type="NCBI Taxonomy" id="243233"/>
    <lineage>
        <taxon>Bacteria</taxon>
        <taxon>Pseudomonadati</taxon>
        <taxon>Pseudomonadota</taxon>
        <taxon>Gammaproteobacteria</taxon>
        <taxon>Methylococcales</taxon>
        <taxon>Methylococcaceae</taxon>
        <taxon>Methylococcus</taxon>
    </lineage>
</organism>
<comment type="function">
    <text evidence="1">Catalyzes the condensation of (S)-aspartate-beta-semialdehyde [(S)-ASA] and pyruvate to 4-hydroxy-tetrahydrodipicolinate (HTPA).</text>
</comment>
<comment type="catalytic activity">
    <reaction evidence="1">
        <text>L-aspartate 4-semialdehyde + pyruvate = (2S,4S)-4-hydroxy-2,3,4,5-tetrahydrodipicolinate + H2O + H(+)</text>
        <dbReference type="Rhea" id="RHEA:34171"/>
        <dbReference type="ChEBI" id="CHEBI:15361"/>
        <dbReference type="ChEBI" id="CHEBI:15377"/>
        <dbReference type="ChEBI" id="CHEBI:15378"/>
        <dbReference type="ChEBI" id="CHEBI:67139"/>
        <dbReference type="ChEBI" id="CHEBI:537519"/>
        <dbReference type="EC" id="4.3.3.7"/>
    </reaction>
</comment>
<comment type="pathway">
    <text evidence="1">Amino-acid biosynthesis; L-lysine biosynthesis via DAP pathway; (S)-tetrahydrodipicolinate from L-aspartate: step 3/4.</text>
</comment>
<comment type="subunit">
    <text evidence="1">Homotetramer; dimer of dimers.</text>
</comment>
<comment type="subcellular location">
    <subcellularLocation>
        <location evidence="1">Cytoplasm</location>
    </subcellularLocation>
</comment>
<comment type="similarity">
    <text evidence="1">Belongs to the DapA family.</text>
</comment>
<comment type="caution">
    <text evidence="2">Was originally thought to be a dihydrodipicolinate synthase (DHDPS), catalyzing the condensation of (S)-aspartate-beta-semialdehyde [(S)-ASA] and pyruvate to dihydrodipicolinate (DHDP). However, it was shown in E.coli that the product of the enzymatic reaction is not dihydrodipicolinate but in fact (4S)-4-hydroxy-2,3,4,5-tetrahydro-(2S)-dipicolinic acid (HTPA), and that the consecutive dehydration reaction leading to DHDP is not spontaneous but catalyzed by DapB.</text>
</comment>